<comment type="function">
    <text evidence="1">Converts 2C-methyl-D-erythritol 2,4-cyclodiphosphate (ME-2,4cPP) into 1-hydroxy-2-methyl-2-(E)-butenyl 4-diphosphate.</text>
</comment>
<comment type="catalytic activity">
    <reaction evidence="1">
        <text>(2E)-4-hydroxy-3-methylbut-2-enyl diphosphate + oxidized [flavodoxin] + H2O + 2 H(+) = 2-C-methyl-D-erythritol 2,4-cyclic diphosphate + reduced [flavodoxin]</text>
        <dbReference type="Rhea" id="RHEA:43604"/>
        <dbReference type="Rhea" id="RHEA-COMP:10622"/>
        <dbReference type="Rhea" id="RHEA-COMP:10623"/>
        <dbReference type="ChEBI" id="CHEBI:15377"/>
        <dbReference type="ChEBI" id="CHEBI:15378"/>
        <dbReference type="ChEBI" id="CHEBI:57618"/>
        <dbReference type="ChEBI" id="CHEBI:58210"/>
        <dbReference type="ChEBI" id="CHEBI:58483"/>
        <dbReference type="ChEBI" id="CHEBI:128753"/>
        <dbReference type="EC" id="1.17.7.3"/>
    </reaction>
</comment>
<comment type="cofactor">
    <cofactor evidence="1">
        <name>[4Fe-4S] cluster</name>
        <dbReference type="ChEBI" id="CHEBI:49883"/>
    </cofactor>
    <text evidence="1">Binds 1 [4Fe-4S] cluster.</text>
</comment>
<comment type="pathway">
    <text evidence="1">Isoprenoid biosynthesis; isopentenyl diphosphate biosynthesis via DXP pathway; isopentenyl diphosphate from 1-deoxy-D-xylulose 5-phosphate: step 5/6.</text>
</comment>
<comment type="similarity">
    <text evidence="1">Belongs to the IspG family.</text>
</comment>
<evidence type="ECO:0000255" key="1">
    <source>
        <dbReference type="HAMAP-Rule" id="MF_00159"/>
    </source>
</evidence>
<feature type="chain" id="PRO_0000190658" description="4-hydroxy-3-methylbut-2-en-1-yl diphosphate synthase (flavodoxin)">
    <location>
        <begin position="1"/>
        <end position="359"/>
    </location>
</feature>
<feature type="binding site" evidence="1">
    <location>
        <position position="263"/>
    </location>
    <ligand>
        <name>[4Fe-4S] cluster</name>
        <dbReference type="ChEBI" id="CHEBI:49883"/>
    </ligand>
</feature>
<feature type="binding site" evidence="1">
    <location>
        <position position="266"/>
    </location>
    <ligand>
        <name>[4Fe-4S] cluster</name>
        <dbReference type="ChEBI" id="CHEBI:49883"/>
    </ligand>
</feature>
<feature type="binding site" evidence="1">
    <location>
        <position position="298"/>
    </location>
    <ligand>
        <name>[4Fe-4S] cluster</name>
        <dbReference type="ChEBI" id="CHEBI:49883"/>
    </ligand>
</feature>
<feature type="binding site" evidence="1">
    <location>
        <position position="305"/>
    </location>
    <ligand>
        <name>[4Fe-4S] cluster</name>
        <dbReference type="ChEBI" id="CHEBI:49883"/>
    </ligand>
</feature>
<reference key="1">
    <citation type="journal article" date="2003" name="Proc. Natl. Acad. Sci. U.S.A.">
        <title>Complete genome sequence and analysis of Wolinella succinogenes.</title>
        <authorList>
            <person name="Baar C."/>
            <person name="Eppinger M."/>
            <person name="Raddatz G."/>
            <person name="Simon J."/>
            <person name="Lanz C."/>
            <person name="Klimmek O."/>
            <person name="Nandakumar R."/>
            <person name="Gross R."/>
            <person name="Rosinus A."/>
            <person name="Keller H."/>
            <person name="Jagtap P."/>
            <person name="Linke B."/>
            <person name="Meyer F."/>
            <person name="Lederer H."/>
            <person name="Schuster S.C."/>
        </authorList>
    </citation>
    <scope>NUCLEOTIDE SEQUENCE [LARGE SCALE GENOMIC DNA]</scope>
    <source>
        <strain>ATCC 29543 / DSM 1740 / CCUG 13145 / JCM 31913 / LMG 7466 / NCTC 11488 / FDC 602W</strain>
    </source>
</reference>
<name>ISPG_WOLSU</name>
<organism>
    <name type="scientific">Wolinella succinogenes (strain ATCC 29543 / DSM 1740 / CCUG 13145 / JCM 31913 / LMG 7466 / NCTC 11488 / FDC 602W)</name>
    <name type="common">Vibrio succinogenes</name>
    <dbReference type="NCBI Taxonomy" id="273121"/>
    <lineage>
        <taxon>Bacteria</taxon>
        <taxon>Pseudomonadati</taxon>
        <taxon>Campylobacterota</taxon>
        <taxon>Epsilonproteobacteria</taxon>
        <taxon>Campylobacterales</taxon>
        <taxon>Helicobacteraceae</taxon>
        <taxon>Wolinella</taxon>
    </lineage>
</organism>
<accession>Q7M8Z2</accession>
<sequence>MQERVKTKKIFVGDVAIGGDAPISVQSMTFSKTADIGATKAQIDRLALAGCDIVRVAVSDHEDANALKELKRLSPLPLVADIHFRYKLALIAAQSVDCIRINPGNIGSKEKIKAVADACAERGIPIRIGVNGGSLEEMFEQKYGATPRGMVESALYNIKLLEDFGFANIKVSLKASDVERTVLAYRELRPLVEYPFHLGVTEAGTLFHSMIKSSMALGGLLLEGIGDTMRVSITGELEQEVEVARAILKYSGRQKEGVYLISCPTCGRIEADLVSAVKRVEERVKHIRAPLQISVMGCAVNALGEAKHADIAIAFGRGDGLIIKKGEILCKLPEEELVDRLVEEAEKLEREYLEDSFKN</sequence>
<protein>
    <recommendedName>
        <fullName evidence="1">4-hydroxy-3-methylbut-2-en-1-yl diphosphate synthase (flavodoxin)</fullName>
        <ecNumber evidence="1">1.17.7.3</ecNumber>
    </recommendedName>
    <alternativeName>
        <fullName evidence="1">1-hydroxy-2-methyl-2-(E)-butenyl 4-diphosphate synthase</fullName>
    </alternativeName>
</protein>
<keyword id="KW-0004">4Fe-4S</keyword>
<keyword id="KW-0408">Iron</keyword>
<keyword id="KW-0411">Iron-sulfur</keyword>
<keyword id="KW-0414">Isoprene biosynthesis</keyword>
<keyword id="KW-0479">Metal-binding</keyword>
<keyword id="KW-0560">Oxidoreductase</keyword>
<keyword id="KW-1185">Reference proteome</keyword>
<dbReference type="EC" id="1.17.7.3" evidence="1"/>
<dbReference type="EMBL" id="BX571660">
    <property type="protein sequence ID" value="CAE10379.1"/>
    <property type="molecule type" value="Genomic_DNA"/>
</dbReference>
<dbReference type="SMR" id="Q7M8Z2"/>
<dbReference type="STRING" id="273121.WS1302"/>
<dbReference type="KEGG" id="wsu:WS1302"/>
<dbReference type="eggNOG" id="COG0821">
    <property type="taxonomic scope" value="Bacteria"/>
</dbReference>
<dbReference type="HOGENOM" id="CLU_042258_0_0_7"/>
<dbReference type="UniPathway" id="UPA00056">
    <property type="reaction ID" value="UER00096"/>
</dbReference>
<dbReference type="Proteomes" id="UP000000422">
    <property type="component" value="Chromosome"/>
</dbReference>
<dbReference type="GO" id="GO:0051539">
    <property type="term" value="F:4 iron, 4 sulfur cluster binding"/>
    <property type="evidence" value="ECO:0007669"/>
    <property type="project" value="UniProtKB-UniRule"/>
</dbReference>
<dbReference type="GO" id="GO:0046429">
    <property type="term" value="F:4-hydroxy-3-methylbut-2-en-1-yl diphosphate synthase activity (ferredoxin)"/>
    <property type="evidence" value="ECO:0007669"/>
    <property type="project" value="UniProtKB-UniRule"/>
</dbReference>
<dbReference type="GO" id="GO:0141197">
    <property type="term" value="F:4-hydroxy-3-methylbut-2-enyl-diphosphate synthase activity (flavodoxin)"/>
    <property type="evidence" value="ECO:0007669"/>
    <property type="project" value="UniProtKB-EC"/>
</dbReference>
<dbReference type="GO" id="GO:0005506">
    <property type="term" value="F:iron ion binding"/>
    <property type="evidence" value="ECO:0007669"/>
    <property type="project" value="InterPro"/>
</dbReference>
<dbReference type="GO" id="GO:0019288">
    <property type="term" value="P:isopentenyl diphosphate biosynthetic process, methylerythritol 4-phosphate pathway"/>
    <property type="evidence" value="ECO:0007669"/>
    <property type="project" value="UniProtKB-UniRule"/>
</dbReference>
<dbReference type="GO" id="GO:0016114">
    <property type="term" value="P:terpenoid biosynthetic process"/>
    <property type="evidence" value="ECO:0007669"/>
    <property type="project" value="InterPro"/>
</dbReference>
<dbReference type="FunFam" id="3.20.20.20:FF:000001">
    <property type="entry name" value="4-hydroxy-3-methylbut-2-en-1-yl diphosphate synthase (flavodoxin)"/>
    <property type="match status" value="1"/>
</dbReference>
<dbReference type="Gene3D" id="3.20.20.20">
    <property type="entry name" value="Dihydropteroate synthase-like"/>
    <property type="match status" value="1"/>
</dbReference>
<dbReference type="Gene3D" id="3.30.413.10">
    <property type="entry name" value="Sulfite Reductase Hemoprotein, domain 1"/>
    <property type="match status" value="1"/>
</dbReference>
<dbReference type="HAMAP" id="MF_00159">
    <property type="entry name" value="IspG"/>
    <property type="match status" value="1"/>
</dbReference>
<dbReference type="InterPro" id="IPR011005">
    <property type="entry name" value="Dihydropteroate_synth-like_sf"/>
</dbReference>
<dbReference type="InterPro" id="IPR016425">
    <property type="entry name" value="IspG_bac"/>
</dbReference>
<dbReference type="InterPro" id="IPR004588">
    <property type="entry name" value="IspG_bac-typ"/>
</dbReference>
<dbReference type="InterPro" id="IPR045854">
    <property type="entry name" value="NO2/SO3_Rdtase_4Fe4S_sf"/>
</dbReference>
<dbReference type="NCBIfam" id="TIGR00612">
    <property type="entry name" value="ispG_gcpE"/>
    <property type="match status" value="1"/>
</dbReference>
<dbReference type="NCBIfam" id="NF001540">
    <property type="entry name" value="PRK00366.1"/>
    <property type="match status" value="1"/>
</dbReference>
<dbReference type="PANTHER" id="PTHR30454">
    <property type="entry name" value="4-HYDROXY-3-METHYLBUT-2-EN-1-YL DIPHOSPHATE SYNTHASE"/>
    <property type="match status" value="1"/>
</dbReference>
<dbReference type="PANTHER" id="PTHR30454:SF0">
    <property type="entry name" value="4-HYDROXY-3-METHYLBUT-2-EN-1-YL DIPHOSPHATE SYNTHASE (FERREDOXIN), CHLOROPLASTIC"/>
    <property type="match status" value="1"/>
</dbReference>
<dbReference type="Pfam" id="PF04551">
    <property type="entry name" value="GcpE"/>
    <property type="match status" value="1"/>
</dbReference>
<dbReference type="PIRSF" id="PIRSF004640">
    <property type="entry name" value="IspG"/>
    <property type="match status" value="1"/>
</dbReference>
<dbReference type="SUPFAM" id="SSF51717">
    <property type="entry name" value="Dihydropteroate synthetase-like"/>
    <property type="match status" value="1"/>
</dbReference>
<dbReference type="SUPFAM" id="SSF56014">
    <property type="entry name" value="Nitrite and sulphite reductase 4Fe-4S domain-like"/>
    <property type="match status" value="1"/>
</dbReference>
<gene>
    <name evidence="1" type="primary">ispG</name>
    <name type="synonym">gcpE</name>
    <name type="ordered locus">WS1302</name>
</gene>
<proteinExistence type="inferred from homology"/>